<proteinExistence type="inferred from homology"/>
<reference key="1">
    <citation type="journal article" date="2004" name="Proc. Natl. Acad. Sci. U.S.A.">
        <title>Structural flexibility in the Burkholderia mallei genome.</title>
        <authorList>
            <person name="Nierman W.C."/>
            <person name="DeShazer D."/>
            <person name="Kim H.S."/>
            <person name="Tettelin H."/>
            <person name="Nelson K.E."/>
            <person name="Feldblyum T.V."/>
            <person name="Ulrich R.L."/>
            <person name="Ronning C.M."/>
            <person name="Brinkac L.M."/>
            <person name="Daugherty S.C."/>
            <person name="Davidsen T.D."/>
            <person name="DeBoy R.T."/>
            <person name="Dimitrov G."/>
            <person name="Dodson R.J."/>
            <person name="Durkin A.S."/>
            <person name="Gwinn M.L."/>
            <person name="Haft D.H."/>
            <person name="Khouri H.M."/>
            <person name="Kolonay J.F."/>
            <person name="Madupu R."/>
            <person name="Mohammoud Y."/>
            <person name="Nelson W.C."/>
            <person name="Radune D."/>
            <person name="Romero C.M."/>
            <person name="Sarria S."/>
            <person name="Selengut J."/>
            <person name="Shamblin C."/>
            <person name="Sullivan S.A."/>
            <person name="White O."/>
            <person name="Yu Y."/>
            <person name="Zafar N."/>
            <person name="Zhou L."/>
            <person name="Fraser C.M."/>
        </authorList>
    </citation>
    <scope>NUCLEOTIDE SEQUENCE [LARGE SCALE GENOMIC DNA]</scope>
    <source>
        <strain>ATCC 23344</strain>
    </source>
</reference>
<name>DTD_BURMA</name>
<gene>
    <name evidence="1" type="primary">dtd</name>
    <name type="ordered locus">BMA2349</name>
</gene>
<protein>
    <recommendedName>
        <fullName evidence="1">D-aminoacyl-tRNA deacylase</fullName>
        <shortName evidence="1">DTD</shortName>
        <ecNumber evidence="1">3.1.1.96</ecNumber>
    </recommendedName>
    <alternativeName>
        <fullName evidence="1">Gly-tRNA(Ala) deacylase</fullName>
    </alternativeName>
</protein>
<feature type="chain" id="PRO_0000164526" description="D-aminoacyl-tRNA deacylase">
    <location>
        <begin position="1"/>
        <end position="152"/>
    </location>
</feature>
<feature type="short sequence motif" description="Gly-cisPro motif, important for rejection of L-amino acids" evidence="1">
    <location>
        <begin position="142"/>
        <end position="143"/>
    </location>
</feature>
<accession>Q62HB3</accession>
<evidence type="ECO:0000255" key="1">
    <source>
        <dbReference type="HAMAP-Rule" id="MF_00518"/>
    </source>
</evidence>
<dbReference type="EC" id="3.1.1.96" evidence="1"/>
<dbReference type="EMBL" id="CP000010">
    <property type="protein sequence ID" value="AAU50220.1"/>
    <property type="molecule type" value="Genomic_DNA"/>
</dbReference>
<dbReference type="RefSeq" id="WP_004200499.1">
    <property type="nucleotide sequence ID" value="NC_006348.1"/>
</dbReference>
<dbReference type="RefSeq" id="YP_103907.1">
    <property type="nucleotide sequence ID" value="NC_006348.1"/>
</dbReference>
<dbReference type="SMR" id="Q62HB3"/>
<dbReference type="GeneID" id="93061498"/>
<dbReference type="KEGG" id="bma:BMA2349"/>
<dbReference type="PATRIC" id="fig|243160.12.peg.2420"/>
<dbReference type="eggNOG" id="COG1490">
    <property type="taxonomic scope" value="Bacteria"/>
</dbReference>
<dbReference type="HOGENOM" id="CLU_076901_1_1_4"/>
<dbReference type="Proteomes" id="UP000006693">
    <property type="component" value="Chromosome 1"/>
</dbReference>
<dbReference type="GO" id="GO:0005737">
    <property type="term" value="C:cytoplasm"/>
    <property type="evidence" value="ECO:0007669"/>
    <property type="project" value="UniProtKB-SubCell"/>
</dbReference>
<dbReference type="GO" id="GO:0051500">
    <property type="term" value="F:D-tyrosyl-tRNA(Tyr) deacylase activity"/>
    <property type="evidence" value="ECO:0007669"/>
    <property type="project" value="TreeGrafter"/>
</dbReference>
<dbReference type="GO" id="GO:0106026">
    <property type="term" value="F:Gly-tRNA(Ala) deacylase activity"/>
    <property type="evidence" value="ECO:0007669"/>
    <property type="project" value="UniProtKB-UniRule"/>
</dbReference>
<dbReference type="GO" id="GO:0043908">
    <property type="term" value="F:Ser(Gly)-tRNA(Ala) hydrolase activity"/>
    <property type="evidence" value="ECO:0007669"/>
    <property type="project" value="UniProtKB-UniRule"/>
</dbReference>
<dbReference type="GO" id="GO:0000049">
    <property type="term" value="F:tRNA binding"/>
    <property type="evidence" value="ECO:0007669"/>
    <property type="project" value="UniProtKB-UniRule"/>
</dbReference>
<dbReference type="GO" id="GO:0019478">
    <property type="term" value="P:D-amino acid catabolic process"/>
    <property type="evidence" value="ECO:0007669"/>
    <property type="project" value="UniProtKB-UniRule"/>
</dbReference>
<dbReference type="CDD" id="cd00563">
    <property type="entry name" value="Dtyr_deacylase"/>
    <property type="match status" value="1"/>
</dbReference>
<dbReference type="FunFam" id="3.50.80.10:FF:000001">
    <property type="entry name" value="D-aminoacyl-tRNA deacylase"/>
    <property type="match status" value="1"/>
</dbReference>
<dbReference type="Gene3D" id="3.50.80.10">
    <property type="entry name" value="D-tyrosyl-tRNA(Tyr) deacylase"/>
    <property type="match status" value="1"/>
</dbReference>
<dbReference type="HAMAP" id="MF_00518">
    <property type="entry name" value="Deacylase_Dtd"/>
    <property type="match status" value="1"/>
</dbReference>
<dbReference type="InterPro" id="IPR003732">
    <property type="entry name" value="Daa-tRNA_deacyls_DTD"/>
</dbReference>
<dbReference type="InterPro" id="IPR023509">
    <property type="entry name" value="DTD-like_sf"/>
</dbReference>
<dbReference type="NCBIfam" id="TIGR00256">
    <property type="entry name" value="D-aminoacyl-tRNA deacylase"/>
    <property type="match status" value="1"/>
</dbReference>
<dbReference type="PANTHER" id="PTHR10472:SF5">
    <property type="entry name" value="D-AMINOACYL-TRNA DEACYLASE 1"/>
    <property type="match status" value="1"/>
</dbReference>
<dbReference type="PANTHER" id="PTHR10472">
    <property type="entry name" value="D-TYROSYL-TRNA TYR DEACYLASE"/>
    <property type="match status" value="1"/>
</dbReference>
<dbReference type="Pfam" id="PF02580">
    <property type="entry name" value="Tyr_Deacylase"/>
    <property type="match status" value="1"/>
</dbReference>
<dbReference type="SUPFAM" id="SSF69500">
    <property type="entry name" value="DTD-like"/>
    <property type="match status" value="1"/>
</dbReference>
<organism>
    <name type="scientific">Burkholderia mallei (strain ATCC 23344)</name>
    <dbReference type="NCBI Taxonomy" id="243160"/>
    <lineage>
        <taxon>Bacteria</taxon>
        <taxon>Pseudomonadati</taxon>
        <taxon>Pseudomonadota</taxon>
        <taxon>Betaproteobacteria</taxon>
        <taxon>Burkholderiales</taxon>
        <taxon>Burkholderiaceae</taxon>
        <taxon>Burkholderia</taxon>
        <taxon>pseudomallei group</taxon>
    </lineage>
</organism>
<comment type="function">
    <text evidence="1">An aminoacyl-tRNA editing enzyme that deacylates mischarged D-aminoacyl-tRNAs. Also deacylates mischarged glycyl-tRNA(Ala), protecting cells against glycine mischarging by AlaRS. Acts via tRNA-based rather than protein-based catalysis; rejects L-amino acids rather than detecting D-amino acids in the active site. By recycling D-aminoacyl-tRNA to D-amino acids and free tRNA molecules, this enzyme counteracts the toxicity associated with the formation of D-aminoacyl-tRNA entities in vivo and helps enforce protein L-homochirality.</text>
</comment>
<comment type="catalytic activity">
    <reaction evidence="1">
        <text>glycyl-tRNA(Ala) + H2O = tRNA(Ala) + glycine + H(+)</text>
        <dbReference type="Rhea" id="RHEA:53744"/>
        <dbReference type="Rhea" id="RHEA-COMP:9657"/>
        <dbReference type="Rhea" id="RHEA-COMP:13640"/>
        <dbReference type="ChEBI" id="CHEBI:15377"/>
        <dbReference type="ChEBI" id="CHEBI:15378"/>
        <dbReference type="ChEBI" id="CHEBI:57305"/>
        <dbReference type="ChEBI" id="CHEBI:78442"/>
        <dbReference type="ChEBI" id="CHEBI:78522"/>
        <dbReference type="EC" id="3.1.1.96"/>
    </reaction>
</comment>
<comment type="catalytic activity">
    <reaction evidence="1">
        <text>a D-aminoacyl-tRNA + H2O = a tRNA + a D-alpha-amino acid + H(+)</text>
        <dbReference type="Rhea" id="RHEA:13953"/>
        <dbReference type="Rhea" id="RHEA-COMP:10123"/>
        <dbReference type="Rhea" id="RHEA-COMP:10124"/>
        <dbReference type="ChEBI" id="CHEBI:15377"/>
        <dbReference type="ChEBI" id="CHEBI:15378"/>
        <dbReference type="ChEBI" id="CHEBI:59871"/>
        <dbReference type="ChEBI" id="CHEBI:78442"/>
        <dbReference type="ChEBI" id="CHEBI:79333"/>
        <dbReference type="EC" id="3.1.1.96"/>
    </reaction>
</comment>
<comment type="subunit">
    <text evidence="1">Homodimer.</text>
</comment>
<comment type="subcellular location">
    <subcellularLocation>
        <location evidence="1">Cytoplasm</location>
    </subcellularLocation>
</comment>
<comment type="domain">
    <text evidence="1">A Gly-cisPro motif from one monomer fits into the active site of the other monomer to allow specific chiral rejection of L-amino acids.</text>
</comment>
<comment type="similarity">
    <text evidence="1">Belongs to the DTD family.</text>
</comment>
<sequence length="152" mass="16254">MIALIQRVKRADVRVGERVTGEIGPGLLALVCAERGDTEAAADKLLAKVLGYRVFSDAAGKMNLPVSNLDGAGRAGGLLLVSQFTLAADTNSGLRPSFTPAAPPDEGERLFDYFVRRARERHPIVATGEFGADMQVSLVNDGPVTFWLQTRA</sequence>
<keyword id="KW-0963">Cytoplasm</keyword>
<keyword id="KW-0378">Hydrolase</keyword>
<keyword id="KW-1185">Reference proteome</keyword>
<keyword id="KW-0694">RNA-binding</keyword>
<keyword id="KW-0820">tRNA-binding</keyword>